<comment type="function">
    <text evidence="1">Catalyzes the conversion of acetaldehyde to acetyl-CoA, using NAD(+) and coenzyme A. Is the final enzyme in the meta-cleavage pathway for the degradation of aromatic compounds.</text>
</comment>
<comment type="catalytic activity">
    <reaction evidence="1">
        <text>acetaldehyde + NAD(+) + CoA = acetyl-CoA + NADH + H(+)</text>
        <dbReference type="Rhea" id="RHEA:23288"/>
        <dbReference type="ChEBI" id="CHEBI:15343"/>
        <dbReference type="ChEBI" id="CHEBI:15378"/>
        <dbReference type="ChEBI" id="CHEBI:57287"/>
        <dbReference type="ChEBI" id="CHEBI:57288"/>
        <dbReference type="ChEBI" id="CHEBI:57540"/>
        <dbReference type="ChEBI" id="CHEBI:57945"/>
        <dbReference type="EC" id="1.2.1.10"/>
    </reaction>
</comment>
<comment type="pathway">
    <text evidence="1">Aromatic compound metabolism; 3-phenylpropanoate degradation.</text>
</comment>
<comment type="subunit">
    <text evidence="1">Interacts with MhpE.</text>
</comment>
<comment type="similarity">
    <text evidence="1">Belongs to the acetaldehyde dehydrogenase family.</text>
</comment>
<sequence>MSKRKVAIIGSGNIGTDLMIKILRHGQHLEMAVMVGIDPQSDGLARARRMGVATTHEGVIGLMNMPEFADIDIVFDATSAGAHVKNDAALREAKPDIRLIDLTPAAIGPYCVPVVNLEANVDQLNVNMVTCGGQATIPMVAAVSRVARVHYAEIIASIASKSAGPGTRANIDEFTETTSRAIEVVGGAAKGKAIIVLNPAEPPLMMRDTVYVLSDEASQDDIEASINEMAEAVQAYVPGYRLKQRVQFEVIPQDKPVNLPGVGQFSGLKTAVWLEVEGAAHYLPAYAGNLDIMTSSALATAEKMAQSLARKAGEAA</sequence>
<feature type="chain" id="PRO_1000215854" description="Acetaldehyde dehydrogenase">
    <location>
        <begin position="1"/>
        <end position="316"/>
    </location>
</feature>
<feature type="active site" description="Acyl-thioester intermediate" evidence="1">
    <location>
        <position position="131"/>
    </location>
</feature>
<feature type="binding site" evidence="1">
    <location>
        <begin position="11"/>
        <end position="14"/>
    </location>
    <ligand>
        <name>NAD(+)</name>
        <dbReference type="ChEBI" id="CHEBI:57540"/>
    </ligand>
</feature>
<feature type="binding site" evidence="1">
    <location>
        <begin position="162"/>
        <end position="170"/>
    </location>
    <ligand>
        <name>NAD(+)</name>
        <dbReference type="ChEBI" id="CHEBI:57540"/>
    </ligand>
</feature>
<feature type="binding site" evidence="1">
    <location>
        <position position="289"/>
    </location>
    <ligand>
        <name>NAD(+)</name>
        <dbReference type="ChEBI" id="CHEBI:57540"/>
    </ligand>
</feature>
<organism>
    <name type="scientific">Escherichia coli (strain K12 / MC4100 / BW2952)</name>
    <dbReference type="NCBI Taxonomy" id="595496"/>
    <lineage>
        <taxon>Bacteria</taxon>
        <taxon>Pseudomonadati</taxon>
        <taxon>Pseudomonadota</taxon>
        <taxon>Gammaproteobacteria</taxon>
        <taxon>Enterobacterales</taxon>
        <taxon>Enterobacteriaceae</taxon>
        <taxon>Escherichia</taxon>
    </lineage>
</organism>
<dbReference type="EC" id="1.2.1.10" evidence="1"/>
<dbReference type="EMBL" id="CP001396">
    <property type="protein sequence ID" value="ACR61896.1"/>
    <property type="molecule type" value="Genomic_DNA"/>
</dbReference>
<dbReference type="RefSeq" id="WP_000044314.1">
    <property type="nucleotide sequence ID" value="NC_012759.1"/>
</dbReference>
<dbReference type="SMR" id="C4ZTB5"/>
<dbReference type="GeneID" id="93777104"/>
<dbReference type="KEGG" id="ebw:BWG_0240"/>
<dbReference type="HOGENOM" id="CLU_062208_0_0_6"/>
<dbReference type="UniPathway" id="UPA00714"/>
<dbReference type="GO" id="GO:0008774">
    <property type="term" value="F:acetaldehyde dehydrogenase (acetylating) activity"/>
    <property type="evidence" value="ECO:0007669"/>
    <property type="project" value="UniProtKB-UniRule"/>
</dbReference>
<dbReference type="GO" id="GO:0051287">
    <property type="term" value="F:NAD binding"/>
    <property type="evidence" value="ECO:0007669"/>
    <property type="project" value="UniProtKB-UniRule"/>
</dbReference>
<dbReference type="GO" id="GO:0019380">
    <property type="term" value="P:3-phenylpropionate catabolic process"/>
    <property type="evidence" value="ECO:0007669"/>
    <property type="project" value="UniProtKB-UniRule"/>
</dbReference>
<dbReference type="CDD" id="cd23933">
    <property type="entry name" value="ALDH_C"/>
    <property type="match status" value="1"/>
</dbReference>
<dbReference type="FunFam" id="3.30.360.10:FF:000021">
    <property type="entry name" value="Acetaldehyde dehydrogenase"/>
    <property type="match status" value="1"/>
</dbReference>
<dbReference type="Gene3D" id="3.30.360.10">
    <property type="entry name" value="Dihydrodipicolinate Reductase, domain 2"/>
    <property type="match status" value="1"/>
</dbReference>
<dbReference type="Gene3D" id="3.40.50.720">
    <property type="entry name" value="NAD(P)-binding Rossmann-like Domain"/>
    <property type="match status" value="1"/>
</dbReference>
<dbReference type="HAMAP" id="MF_01657">
    <property type="entry name" value="Ac_ald_DH_ac"/>
    <property type="match status" value="1"/>
</dbReference>
<dbReference type="InterPro" id="IPR003361">
    <property type="entry name" value="Acetaldehyde_dehydrogenase"/>
</dbReference>
<dbReference type="InterPro" id="IPR015426">
    <property type="entry name" value="Acetylaldehyde_DH_C"/>
</dbReference>
<dbReference type="InterPro" id="IPR036291">
    <property type="entry name" value="NAD(P)-bd_dom_sf"/>
</dbReference>
<dbReference type="InterPro" id="IPR000534">
    <property type="entry name" value="Semialdehyde_DH_NAD-bd"/>
</dbReference>
<dbReference type="NCBIfam" id="TIGR03215">
    <property type="entry name" value="ac_ald_DH_ac"/>
    <property type="match status" value="1"/>
</dbReference>
<dbReference type="NCBIfam" id="NF006157">
    <property type="entry name" value="PRK08300.1"/>
    <property type="match status" value="1"/>
</dbReference>
<dbReference type="Pfam" id="PF09290">
    <property type="entry name" value="AcetDehyd-dimer"/>
    <property type="match status" value="1"/>
</dbReference>
<dbReference type="Pfam" id="PF01118">
    <property type="entry name" value="Semialdhyde_dh"/>
    <property type="match status" value="1"/>
</dbReference>
<dbReference type="PIRSF" id="PIRSF015689">
    <property type="entry name" value="Actaldh_dh_actl"/>
    <property type="match status" value="1"/>
</dbReference>
<dbReference type="SMART" id="SM00859">
    <property type="entry name" value="Semialdhyde_dh"/>
    <property type="match status" value="1"/>
</dbReference>
<dbReference type="SUPFAM" id="SSF55347">
    <property type="entry name" value="Glyceraldehyde-3-phosphate dehydrogenase-like, C-terminal domain"/>
    <property type="match status" value="1"/>
</dbReference>
<dbReference type="SUPFAM" id="SSF51735">
    <property type="entry name" value="NAD(P)-binding Rossmann-fold domains"/>
    <property type="match status" value="1"/>
</dbReference>
<reference key="1">
    <citation type="journal article" date="2009" name="J. Bacteriol.">
        <title>Genomic sequencing reveals regulatory mutations and recombinational events in the widely used MC4100 lineage of Escherichia coli K-12.</title>
        <authorList>
            <person name="Ferenci T."/>
            <person name="Zhou Z."/>
            <person name="Betteridge T."/>
            <person name="Ren Y."/>
            <person name="Liu Y."/>
            <person name="Feng L."/>
            <person name="Reeves P.R."/>
            <person name="Wang L."/>
        </authorList>
    </citation>
    <scope>NUCLEOTIDE SEQUENCE [LARGE SCALE GENOMIC DNA]</scope>
    <source>
        <strain>K12 / MC4100 / BW2952</strain>
    </source>
</reference>
<proteinExistence type="inferred from homology"/>
<evidence type="ECO:0000255" key="1">
    <source>
        <dbReference type="HAMAP-Rule" id="MF_01657"/>
    </source>
</evidence>
<name>ACDH_ECOBW</name>
<accession>C4ZTB5</accession>
<protein>
    <recommendedName>
        <fullName evidence="1">Acetaldehyde dehydrogenase</fullName>
        <ecNumber evidence="1">1.2.1.10</ecNumber>
    </recommendedName>
    <alternativeName>
        <fullName evidence="1">Acetaldehyde dehydrogenase [acetylating]</fullName>
    </alternativeName>
</protein>
<keyword id="KW-0058">Aromatic hydrocarbons catabolism</keyword>
<keyword id="KW-0520">NAD</keyword>
<keyword id="KW-0560">Oxidoreductase</keyword>
<gene>
    <name evidence="1" type="primary">mhpF</name>
    <name type="ordered locus">BWG_0240</name>
</gene>